<gene>
    <name type="primary">ATG32</name>
    <name type="synonym">ECM17</name>
    <name type="ORF">C1Q_04175</name>
</gene>
<dbReference type="EMBL" id="ACFL01000319">
    <property type="protein sequence ID" value="EEU05446.1"/>
    <property type="molecule type" value="Genomic_DNA"/>
</dbReference>
<dbReference type="SMR" id="C7GUR3"/>
<dbReference type="Proteomes" id="UP000008073">
    <property type="component" value="Unassembled WGS sequence"/>
</dbReference>
<dbReference type="GO" id="GO:0005741">
    <property type="term" value="C:mitochondrial outer membrane"/>
    <property type="evidence" value="ECO:0007669"/>
    <property type="project" value="UniProtKB-SubCell"/>
</dbReference>
<dbReference type="GO" id="GO:0034045">
    <property type="term" value="C:phagophore assembly site membrane"/>
    <property type="evidence" value="ECO:0007669"/>
    <property type="project" value="UniProtKB-SubCell"/>
</dbReference>
<dbReference type="GO" id="GO:0005774">
    <property type="term" value="C:vacuolar membrane"/>
    <property type="evidence" value="ECO:0007669"/>
    <property type="project" value="UniProtKB-SubCell"/>
</dbReference>
<dbReference type="GO" id="GO:0006914">
    <property type="term" value="P:autophagy"/>
    <property type="evidence" value="ECO:0007669"/>
    <property type="project" value="UniProtKB-KW"/>
</dbReference>
<dbReference type="CDD" id="cd19929">
    <property type="entry name" value="psREC_Atg32"/>
    <property type="match status" value="1"/>
</dbReference>
<reference key="1">
    <citation type="journal article" date="2009" name="Genome Res.">
        <title>Genome structure of a Saccharomyces cerevisiae strain widely used in bioethanol production.</title>
        <authorList>
            <person name="Argueso J.L."/>
            <person name="Carazzolle M.F."/>
            <person name="Mieczkowski P.A."/>
            <person name="Duarte F.M."/>
            <person name="Netto O.V.C."/>
            <person name="Missawa S.K."/>
            <person name="Galzerani F."/>
            <person name="Costa G.G.L."/>
            <person name="Vidal R.O."/>
            <person name="Noronha M.F."/>
            <person name="Dominska M."/>
            <person name="Andrietta M.G.S."/>
            <person name="Andrietta S.R."/>
            <person name="Cunha A.F."/>
            <person name="Gomes L.H."/>
            <person name="Tavares F.C.A."/>
            <person name="Alcarde A.R."/>
            <person name="Dietrich F.S."/>
            <person name="McCusker J.H."/>
            <person name="Petes T.D."/>
            <person name="Pereira G.A.G."/>
        </authorList>
    </citation>
    <scope>NUCLEOTIDE SEQUENCE [LARGE SCALE GENOMIC DNA]</scope>
    <source>
        <strain>JAY291</strain>
    </source>
</reference>
<accession>C7GUR3</accession>
<comment type="function">
    <text evidence="1">Mitophagy-specific receptor that recruits the autophagic machinery to mitochondria and regulates selective degradation of mitochondria. Mitophagy contributes to regulate mitochondrial quantity and quality by eliminating the mitochondria to a basal level to fulfill cellular energy requirements and preventing excess ROS production. Recruits ATG11 to the surface of mitochondria. Also promotes autophagy-dependent peroxisome degradation (By similarity).</text>
</comment>
<comment type="subunit">
    <text evidence="1">interacts with ATG8 and ATG11.</text>
</comment>
<comment type="subcellular location">
    <subcellularLocation>
        <location evidence="1">Mitochondrion outer membrane</location>
        <topology evidence="1">Single-pass membrane protein</topology>
    </subcellularLocation>
    <subcellularLocation>
        <location evidence="1">Vacuole membrane</location>
        <topology evidence="1">Single-pass membrane protein</topology>
    </subcellularLocation>
    <subcellularLocation>
        <location evidence="1">Preautophagosomal structure membrane</location>
        <topology evidence="1">Single-pass membrane protein</topology>
    </subcellularLocation>
    <text evidence="1">Is recruited to the preautophagosomal structure during mitophagy and imported into the vacuole along with mitochondria during starvation.</text>
</comment>
<comment type="PTM">
    <text evidence="1">Phosphorylation of Ser-114 and Ser-119 are critically important for mitophagy and for the ATG11-ATG32 interaction. Phosphorylation depends on both HOG1 and PBS2.</text>
</comment>
<comment type="similarity">
    <text evidence="5">Belongs to the ATG32 family.</text>
</comment>
<keyword id="KW-0072">Autophagy</keyword>
<keyword id="KW-0472">Membrane</keyword>
<keyword id="KW-0496">Mitochondrion</keyword>
<keyword id="KW-1000">Mitochondrion outer membrane</keyword>
<keyword id="KW-0597">Phosphoprotein</keyword>
<keyword id="KW-0812">Transmembrane</keyword>
<keyword id="KW-1133">Transmembrane helix</keyword>
<keyword id="KW-0926">Vacuole</keyword>
<protein>
    <recommendedName>
        <fullName>Autophagy-related protein 32</fullName>
    </recommendedName>
    <alternativeName>
        <fullName>Extracellular mutant protein 37</fullName>
    </alternativeName>
</protein>
<proteinExistence type="inferred from homology"/>
<name>ATG32_YEAS2</name>
<feature type="chain" id="PRO_0000399761" description="Autophagy-related protein 32">
    <location>
        <begin position="1"/>
        <end position="529"/>
    </location>
</feature>
<feature type="transmembrane region" description="Helical" evidence="3">
    <location>
        <begin position="389"/>
        <end position="411"/>
    </location>
</feature>
<feature type="region of interest" description="Disordered" evidence="4">
    <location>
        <begin position="1"/>
        <end position="41"/>
    </location>
</feature>
<feature type="region of interest" description="Disordered" evidence="4">
    <location>
        <begin position="345"/>
        <end position="381"/>
    </location>
</feature>
<feature type="compositionally biased region" description="Basic and acidic residues" evidence="4">
    <location>
        <begin position="1"/>
        <end position="11"/>
    </location>
</feature>
<feature type="compositionally biased region" description="Low complexity" evidence="4">
    <location>
        <begin position="12"/>
        <end position="24"/>
    </location>
</feature>
<feature type="compositionally biased region" description="Polar residues" evidence="4">
    <location>
        <begin position="25"/>
        <end position="34"/>
    </location>
</feature>
<feature type="compositionally biased region" description="Basic residues" evidence="4">
    <location>
        <begin position="370"/>
        <end position="381"/>
    </location>
</feature>
<feature type="modified residue" description="Phosphoserine" evidence="2">
    <location>
        <position position="114"/>
    </location>
</feature>
<feature type="modified residue" description="Phosphoserine" evidence="2">
    <location>
        <position position="119"/>
    </location>
</feature>
<organism>
    <name type="scientific">Saccharomyces cerevisiae (strain JAY291)</name>
    <name type="common">Baker's yeast</name>
    <dbReference type="NCBI Taxonomy" id="574961"/>
    <lineage>
        <taxon>Eukaryota</taxon>
        <taxon>Fungi</taxon>
        <taxon>Dikarya</taxon>
        <taxon>Ascomycota</taxon>
        <taxon>Saccharomycotina</taxon>
        <taxon>Saccharomycetes</taxon>
        <taxon>Saccharomycetales</taxon>
        <taxon>Saccharomycetaceae</taxon>
        <taxon>Saccharomyces</taxon>
    </lineage>
</organism>
<sequence>MVLEYQQREGKGSSSKSMPPDSSSTTIHTCSEAQTGEDKGLLDPHLSVLELLSKTGHSPSPMGQNLVTSIDISGNHNVNDSISGSWQAIQPLDLGASFIPERCSSQTTNGSILSSSDTSEEEQELLQAPAADIINIIKQGQEGANVVSPSHPFKQLQKIISLPLPGKEKTPFNEQDDDGDEDEAFEEDSVTITKSLTSSTNSFVMPKLSLTQKNPVFRLLILGRTGSSFYQSIPKEYQSLFELPKYHDSATFPQYTGIVIIFQELREMVSLLNRIVQYSQGKPVIPICQPGQVIQVKNVLKSFLRNKLVKLLFPPVVVTNKRDLKKMFQRLQDLSLEYGEDVNEEDNDDEAIHTKSRSYCRNKKAENSKKKSPKSNKKPKRKKQKFFTSWFTWGISITIGISFGCCVTYFVTAAYEHQTVKSLSLRPSILASLLSLDSSSDTINTPATASPSSTEQFLWFDKGTLQINFHSDGFIMKSLTIIKETWGKMNTFVLHALSKPLKFLENLNKSSEFSIDESNRILALGYILL</sequence>
<evidence type="ECO:0000250" key="1"/>
<evidence type="ECO:0000250" key="2">
    <source>
        <dbReference type="UniProtKB" id="P40458"/>
    </source>
</evidence>
<evidence type="ECO:0000255" key="3"/>
<evidence type="ECO:0000256" key="4">
    <source>
        <dbReference type="SAM" id="MobiDB-lite"/>
    </source>
</evidence>
<evidence type="ECO:0000305" key="5"/>